<name>RL20_DINSH</name>
<comment type="function">
    <text evidence="1">Binds directly to 23S ribosomal RNA and is necessary for the in vitro assembly process of the 50S ribosomal subunit. It is not involved in the protein synthesizing functions of that subunit.</text>
</comment>
<comment type="similarity">
    <text evidence="1">Belongs to the bacterial ribosomal protein bL20 family.</text>
</comment>
<dbReference type="EMBL" id="CP000830">
    <property type="protein sequence ID" value="ABV91980.1"/>
    <property type="molecule type" value="Genomic_DNA"/>
</dbReference>
<dbReference type="RefSeq" id="WP_012176913.1">
    <property type="nucleotide sequence ID" value="NC_009952.1"/>
</dbReference>
<dbReference type="SMR" id="A8LLH0"/>
<dbReference type="STRING" id="398580.Dshi_0231"/>
<dbReference type="KEGG" id="dsh:Dshi_0231"/>
<dbReference type="eggNOG" id="COG0292">
    <property type="taxonomic scope" value="Bacteria"/>
</dbReference>
<dbReference type="HOGENOM" id="CLU_123265_0_1_5"/>
<dbReference type="OrthoDB" id="9808966at2"/>
<dbReference type="Proteomes" id="UP000006833">
    <property type="component" value="Chromosome"/>
</dbReference>
<dbReference type="GO" id="GO:1990904">
    <property type="term" value="C:ribonucleoprotein complex"/>
    <property type="evidence" value="ECO:0007669"/>
    <property type="project" value="UniProtKB-KW"/>
</dbReference>
<dbReference type="GO" id="GO:0005840">
    <property type="term" value="C:ribosome"/>
    <property type="evidence" value="ECO:0007669"/>
    <property type="project" value="UniProtKB-KW"/>
</dbReference>
<dbReference type="GO" id="GO:0019843">
    <property type="term" value="F:rRNA binding"/>
    <property type="evidence" value="ECO:0007669"/>
    <property type="project" value="UniProtKB-UniRule"/>
</dbReference>
<dbReference type="GO" id="GO:0003735">
    <property type="term" value="F:structural constituent of ribosome"/>
    <property type="evidence" value="ECO:0007669"/>
    <property type="project" value="InterPro"/>
</dbReference>
<dbReference type="GO" id="GO:0000027">
    <property type="term" value="P:ribosomal large subunit assembly"/>
    <property type="evidence" value="ECO:0007669"/>
    <property type="project" value="UniProtKB-UniRule"/>
</dbReference>
<dbReference type="GO" id="GO:0006412">
    <property type="term" value="P:translation"/>
    <property type="evidence" value="ECO:0007669"/>
    <property type="project" value="InterPro"/>
</dbReference>
<dbReference type="CDD" id="cd07026">
    <property type="entry name" value="Ribosomal_L20"/>
    <property type="match status" value="1"/>
</dbReference>
<dbReference type="FunFam" id="1.10.1900.20:FF:000001">
    <property type="entry name" value="50S ribosomal protein L20"/>
    <property type="match status" value="1"/>
</dbReference>
<dbReference type="Gene3D" id="6.10.160.10">
    <property type="match status" value="1"/>
</dbReference>
<dbReference type="Gene3D" id="1.10.1900.20">
    <property type="entry name" value="Ribosomal protein L20"/>
    <property type="match status" value="1"/>
</dbReference>
<dbReference type="HAMAP" id="MF_00382">
    <property type="entry name" value="Ribosomal_bL20"/>
    <property type="match status" value="1"/>
</dbReference>
<dbReference type="InterPro" id="IPR005813">
    <property type="entry name" value="Ribosomal_bL20"/>
</dbReference>
<dbReference type="InterPro" id="IPR049946">
    <property type="entry name" value="RIBOSOMAL_L20_CS"/>
</dbReference>
<dbReference type="InterPro" id="IPR035566">
    <property type="entry name" value="Ribosomal_protein_bL20_C"/>
</dbReference>
<dbReference type="NCBIfam" id="TIGR01032">
    <property type="entry name" value="rplT_bact"/>
    <property type="match status" value="1"/>
</dbReference>
<dbReference type="PANTHER" id="PTHR10986">
    <property type="entry name" value="39S RIBOSOMAL PROTEIN L20"/>
    <property type="match status" value="1"/>
</dbReference>
<dbReference type="Pfam" id="PF00453">
    <property type="entry name" value="Ribosomal_L20"/>
    <property type="match status" value="1"/>
</dbReference>
<dbReference type="PRINTS" id="PR00062">
    <property type="entry name" value="RIBOSOMALL20"/>
</dbReference>
<dbReference type="SUPFAM" id="SSF74731">
    <property type="entry name" value="Ribosomal protein L20"/>
    <property type="match status" value="1"/>
</dbReference>
<dbReference type="PROSITE" id="PS00937">
    <property type="entry name" value="RIBOSOMAL_L20"/>
    <property type="match status" value="1"/>
</dbReference>
<reference key="1">
    <citation type="journal article" date="2010" name="ISME J.">
        <title>The complete genome sequence of the algal symbiont Dinoroseobacter shibae: a hitchhiker's guide to life in the sea.</title>
        <authorList>
            <person name="Wagner-Dobler I."/>
            <person name="Ballhausen B."/>
            <person name="Berger M."/>
            <person name="Brinkhoff T."/>
            <person name="Buchholz I."/>
            <person name="Bunk B."/>
            <person name="Cypionka H."/>
            <person name="Daniel R."/>
            <person name="Drepper T."/>
            <person name="Gerdts G."/>
            <person name="Hahnke S."/>
            <person name="Han C."/>
            <person name="Jahn D."/>
            <person name="Kalhoefer D."/>
            <person name="Kiss H."/>
            <person name="Klenk H.P."/>
            <person name="Kyrpides N."/>
            <person name="Liebl W."/>
            <person name="Liesegang H."/>
            <person name="Meincke L."/>
            <person name="Pati A."/>
            <person name="Petersen J."/>
            <person name="Piekarski T."/>
            <person name="Pommerenke C."/>
            <person name="Pradella S."/>
            <person name="Pukall R."/>
            <person name="Rabus R."/>
            <person name="Stackebrandt E."/>
            <person name="Thole S."/>
            <person name="Thompson L."/>
            <person name="Tielen P."/>
            <person name="Tomasch J."/>
            <person name="von Jan M."/>
            <person name="Wanphrut N."/>
            <person name="Wichels A."/>
            <person name="Zech H."/>
            <person name="Simon M."/>
        </authorList>
    </citation>
    <scope>NUCLEOTIDE SEQUENCE [LARGE SCALE GENOMIC DNA]</scope>
    <source>
        <strain>DSM 16493 / NCIMB 14021 / DFL 12</strain>
    </source>
</reference>
<accession>A8LLH0</accession>
<gene>
    <name evidence="1" type="primary">rplT</name>
    <name type="ordered locus">Dshi_0231</name>
</gene>
<feature type="chain" id="PRO_1000080070" description="Large ribosomal subunit protein bL20">
    <location>
        <begin position="1"/>
        <end position="121"/>
    </location>
</feature>
<evidence type="ECO:0000255" key="1">
    <source>
        <dbReference type="HAMAP-Rule" id="MF_00382"/>
    </source>
</evidence>
<evidence type="ECO:0000305" key="2"/>
<proteinExistence type="inferred from homology"/>
<protein>
    <recommendedName>
        <fullName evidence="1">Large ribosomal subunit protein bL20</fullName>
    </recommendedName>
    <alternativeName>
        <fullName evidence="2">50S ribosomal protein L20</fullName>
    </alternativeName>
</protein>
<sequence>MSRTKGGTVTHARHKKVTDAAKGYYGRRKNTFKVARQAVDKANQYATRDRKNRKRQFRALWIQRINAAVRAHDEALTYSRFINGLSLAGIEVDRKVLADLAVHEPEAFSAIVDQAKAALPA</sequence>
<keyword id="KW-1185">Reference proteome</keyword>
<keyword id="KW-0687">Ribonucleoprotein</keyword>
<keyword id="KW-0689">Ribosomal protein</keyword>
<keyword id="KW-0694">RNA-binding</keyword>
<keyword id="KW-0699">rRNA-binding</keyword>
<organism>
    <name type="scientific">Dinoroseobacter shibae (strain DSM 16493 / NCIMB 14021 / DFL 12)</name>
    <dbReference type="NCBI Taxonomy" id="398580"/>
    <lineage>
        <taxon>Bacteria</taxon>
        <taxon>Pseudomonadati</taxon>
        <taxon>Pseudomonadota</taxon>
        <taxon>Alphaproteobacteria</taxon>
        <taxon>Rhodobacterales</taxon>
        <taxon>Roseobacteraceae</taxon>
        <taxon>Dinoroseobacter</taxon>
    </lineage>
</organism>